<gene>
    <name evidence="1" type="primary">tgt</name>
    <name type="ordered locus">Ping_2214</name>
</gene>
<evidence type="ECO:0000255" key="1">
    <source>
        <dbReference type="HAMAP-Rule" id="MF_00168"/>
    </source>
</evidence>
<comment type="function">
    <text evidence="1">Catalyzes the base-exchange of a guanine (G) residue with the queuine precursor 7-aminomethyl-7-deazaguanine (PreQ1) at position 34 (anticodon wobble position) in tRNAs with GU(N) anticodons (tRNA-Asp, -Asn, -His and -Tyr). Catalysis occurs through a double-displacement mechanism. The nucleophile active site attacks the C1' of nucleotide 34 to detach the guanine base from the RNA, forming a covalent enzyme-RNA intermediate. The proton acceptor active site deprotonates the incoming PreQ1, allowing a nucleophilic attack on the C1' of the ribose to form the product. After dissociation, two additional enzymatic reactions on the tRNA convert PreQ1 to queuine (Q), resulting in the hypermodified nucleoside queuosine (7-(((4,5-cis-dihydroxy-2-cyclopenten-1-yl)amino)methyl)-7-deazaguanosine).</text>
</comment>
<comment type="catalytic activity">
    <reaction evidence="1">
        <text>7-aminomethyl-7-carbaguanine + guanosine(34) in tRNA = 7-aminomethyl-7-carbaguanosine(34) in tRNA + guanine</text>
        <dbReference type="Rhea" id="RHEA:24104"/>
        <dbReference type="Rhea" id="RHEA-COMP:10341"/>
        <dbReference type="Rhea" id="RHEA-COMP:10342"/>
        <dbReference type="ChEBI" id="CHEBI:16235"/>
        <dbReference type="ChEBI" id="CHEBI:58703"/>
        <dbReference type="ChEBI" id="CHEBI:74269"/>
        <dbReference type="ChEBI" id="CHEBI:82833"/>
        <dbReference type="EC" id="2.4.2.29"/>
    </reaction>
</comment>
<comment type="cofactor">
    <cofactor evidence="1">
        <name>Zn(2+)</name>
        <dbReference type="ChEBI" id="CHEBI:29105"/>
    </cofactor>
    <text evidence="1">Binds 1 zinc ion per subunit.</text>
</comment>
<comment type="pathway">
    <text evidence="1">tRNA modification; tRNA-queuosine biosynthesis.</text>
</comment>
<comment type="subunit">
    <text evidence="1">Homodimer. Within each dimer, one monomer is responsible for RNA recognition and catalysis, while the other monomer binds to the replacement base PreQ1.</text>
</comment>
<comment type="similarity">
    <text evidence="1">Belongs to the queuine tRNA-ribosyltransferase family.</text>
</comment>
<organism>
    <name type="scientific">Psychromonas ingrahamii (strain DSM 17664 / CCUG 51855 / 37)</name>
    <dbReference type="NCBI Taxonomy" id="357804"/>
    <lineage>
        <taxon>Bacteria</taxon>
        <taxon>Pseudomonadati</taxon>
        <taxon>Pseudomonadota</taxon>
        <taxon>Gammaproteobacteria</taxon>
        <taxon>Alteromonadales</taxon>
        <taxon>Psychromonadaceae</taxon>
        <taxon>Psychromonas</taxon>
    </lineage>
</organism>
<sequence>MEYKLINTDGRARRGRLTFDRGSVETPAFMPVGTYGTVKGMTPEEVDATGAEILLGNTFHLWLRPGQKVIKAHGDLHDFMNWKGPILTDSGGFQVFSLGKMRKIKEEGVYFRSPINGSEVFLSPEISMDIQYDLGSDIVMIFDECTPYPATEEETDVSMQLSLRWAQRSRDRFDEQQNPNALFGIIQGGCFEQFRDISLDGLTNIGFDGYAIGGLAVGEPKEDMYRILEYIAPKIPEDKPRYLMGVGKPEDLVEGVRRGIDMFDCVMPTRNARNGHLFTTDGVIKIRNAKHREDATTLDSECDCYTCKNYTRAYLYHLDKCGEILGARLNTIHNLSYYQRLMKGLREAIEQGKLEDFVDTFYQRIGKEKPMLDV</sequence>
<feature type="chain" id="PRO_1000016830" description="Queuine tRNA-ribosyltransferase">
    <location>
        <begin position="1"/>
        <end position="374"/>
    </location>
</feature>
<feature type="region of interest" description="RNA binding" evidence="1">
    <location>
        <begin position="245"/>
        <end position="251"/>
    </location>
</feature>
<feature type="region of interest" description="RNA binding; important for wobble base 34 recognition" evidence="1">
    <location>
        <begin position="269"/>
        <end position="273"/>
    </location>
</feature>
<feature type="active site" description="Proton acceptor" evidence="1">
    <location>
        <position position="89"/>
    </location>
</feature>
<feature type="active site" description="Nucleophile" evidence="1">
    <location>
        <position position="264"/>
    </location>
</feature>
<feature type="binding site" evidence="1">
    <location>
        <begin position="89"/>
        <end position="93"/>
    </location>
    <ligand>
        <name>substrate</name>
    </ligand>
</feature>
<feature type="binding site" evidence="1">
    <location>
        <position position="143"/>
    </location>
    <ligand>
        <name>substrate</name>
    </ligand>
</feature>
<feature type="binding site" evidence="1">
    <location>
        <position position="187"/>
    </location>
    <ligand>
        <name>substrate</name>
    </ligand>
</feature>
<feature type="binding site" evidence="1">
    <location>
        <position position="214"/>
    </location>
    <ligand>
        <name>substrate</name>
    </ligand>
</feature>
<feature type="binding site" evidence="1">
    <location>
        <position position="302"/>
    </location>
    <ligand>
        <name>Zn(2+)</name>
        <dbReference type="ChEBI" id="CHEBI:29105"/>
    </ligand>
</feature>
<feature type="binding site" evidence="1">
    <location>
        <position position="304"/>
    </location>
    <ligand>
        <name>Zn(2+)</name>
        <dbReference type="ChEBI" id="CHEBI:29105"/>
    </ligand>
</feature>
<feature type="binding site" evidence="1">
    <location>
        <position position="307"/>
    </location>
    <ligand>
        <name>Zn(2+)</name>
        <dbReference type="ChEBI" id="CHEBI:29105"/>
    </ligand>
</feature>
<feature type="binding site" evidence="1">
    <location>
        <position position="333"/>
    </location>
    <ligand>
        <name>Zn(2+)</name>
        <dbReference type="ChEBI" id="CHEBI:29105"/>
    </ligand>
</feature>
<name>TGT_PSYIN</name>
<dbReference type="EC" id="2.4.2.29" evidence="1"/>
<dbReference type="EMBL" id="CP000510">
    <property type="protein sequence ID" value="ABM03955.1"/>
    <property type="molecule type" value="Genomic_DNA"/>
</dbReference>
<dbReference type="RefSeq" id="WP_011770515.1">
    <property type="nucleotide sequence ID" value="NC_008709.1"/>
</dbReference>
<dbReference type="SMR" id="A1SWU0"/>
<dbReference type="STRING" id="357804.Ping_2214"/>
<dbReference type="KEGG" id="pin:Ping_2214"/>
<dbReference type="eggNOG" id="COG0343">
    <property type="taxonomic scope" value="Bacteria"/>
</dbReference>
<dbReference type="HOGENOM" id="CLU_022060_0_1_6"/>
<dbReference type="OrthoDB" id="9805417at2"/>
<dbReference type="UniPathway" id="UPA00392"/>
<dbReference type="Proteomes" id="UP000000639">
    <property type="component" value="Chromosome"/>
</dbReference>
<dbReference type="GO" id="GO:0005829">
    <property type="term" value="C:cytosol"/>
    <property type="evidence" value="ECO:0007669"/>
    <property type="project" value="TreeGrafter"/>
</dbReference>
<dbReference type="GO" id="GO:0046872">
    <property type="term" value="F:metal ion binding"/>
    <property type="evidence" value="ECO:0007669"/>
    <property type="project" value="UniProtKB-KW"/>
</dbReference>
<dbReference type="GO" id="GO:0008479">
    <property type="term" value="F:tRNA-guanosine(34) queuine transglycosylase activity"/>
    <property type="evidence" value="ECO:0007669"/>
    <property type="project" value="UniProtKB-UniRule"/>
</dbReference>
<dbReference type="GO" id="GO:0008616">
    <property type="term" value="P:queuosine biosynthetic process"/>
    <property type="evidence" value="ECO:0007669"/>
    <property type="project" value="UniProtKB-UniRule"/>
</dbReference>
<dbReference type="GO" id="GO:0002099">
    <property type="term" value="P:tRNA wobble guanine modification"/>
    <property type="evidence" value="ECO:0007669"/>
    <property type="project" value="TreeGrafter"/>
</dbReference>
<dbReference type="GO" id="GO:0101030">
    <property type="term" value="P:tRNA-guanine transglycosylation"/>
    <property type="evidence" value="ECO:0007669"/>
    <property type="project" value="InterPro"/>
</dbReference>
<dbReference type="FunFam" id="3.20.20.105:FF:000001">
    <property type="entry name" value="Queuine tRNA-ribosyltransferase"/>
    <property type="match status" value="1"/>
</dbReference>
<dbReference type="Gene3D" id="3.20.20.105">
    <property type="entry name" value="Queuine tRNA-ribosyltransferase-like"/>
    <property type="match status" value="1"/>
</dbReference>
<dbReference type="HAMAP" id="MF_00168">
    <property type="entry name" value="Q_tRNA_Tgt"/>
    <property type="match status" value="1"/>
</dbReference>
<dbReference type="InterPro" id="IPR050076">
    <property type="entry name" value="ArchSynthase1/Queuine_TRR"/>
</dbReference>
<dbReference type="InterPro" id="IPR004803">
    <property type="entry name" value="TGT"/>
</dbReference>
<dbReference type="InterPro" id="IPR036511">
    <property type="entry name" value="TGT-like_sf"/>
</dbReference>
<dbReference type="InterPro" id="IPR002616">
    <property type="entry name" value="tRNA_ribo_trans-like"/>
</dbReference>
<dbReference type="NCBIfam" id="TIGR00430">
    <property type="entry name" value="Q_tRNA_tgt"/>
    <property type="match status" value="1"/>
</dbReference>
<dbReference type="NCBIfam" id="TIGR00449">
    <property type="entry name" value="tgt_general"/>
    <property type="match status" value="1"/>
</dbReference>
<dbReference type="PANTHER" id="PTHR46499">
    <property type="entry name" value="QUEUINE TRNA-RIBOSYLTRANSFERASE"/>
    <property type="match status" value="1"/>
</dbReference>
<dbReference type="PANTHER" id="PTHR46499:SF1">
    <property type="entry name" value="QUEUINE TRNA-RIBOSYLTRANSFERASE"/>
    <property type="match status" value="1"/>
</dbReference>
<dbReference type="Pfam" id="PF01702">
    <property type="entry name" value="TGT"/>
    <property type="match status" value="1"/>
</dbReference>
<dbReference type="SUPFAM" id="SSF51713">
    <property type="entry name" value="tRNA-guanine transglycosylase"/>
    <property type="match status" value="1"/>
</dbReference>
<proteinExistence type="inferred from homology"/>
<reference key="1">
    <citation type="journal article" date="2008" name="BMC Genomics">
        <title>Genomics of an extreme psychrophile, Psychromonas ingrahamii.</title>
        <authorList>
            <person name="Riley M."/>
            <person name="Staley J.T."/>
            <person name="Danchin A."/>
            <person name="Wang T.Z."/>
            <person name="Brettin T.S."/>
            <person name="Hauser L.J."/>
            <person name="Land M.L."/>
            <person name="Thompson L.S."/>
        </authorList>
    </citation>
    <scope>NUCLEOTIDE SEQUENCE [LARGE SCALE GENOMIC DNA]</scope>
    <source>
        <strain>DSM 17664 / CCUG 51855 / 37</strain>
    </source>
</reference>
<keyword id="KW-0328">Glycosyltransferase</keyword>
<keyword id="KW-0479">Metal-binding</keyword>
<keyword id="KW-0671">Queuosine biosynthesis</keyword>
<keyword id="KW-1185">Reference proteome</keyword>
<keyword id="KW-0808">Transferase</keyword>
<keyword id="KW-0819">tRNA processing</keyword>
<keyword id="KW-0862">Zinc</keyword>
<protein>
    <recommendedName>
        <fullName evidence="1">Queuine tRNA-ribosyltransferase</fullName>
        <ecNumber evidence="1">2.4.2.29</ecNumber>
    </recommendedName>
    <alternativeName>
        <fullName evidence="1">Guanine insertion enzyme</fullName>
    </alternativeName>
    <alternativeName>
        <fullName evidence="1">tRNA-guanine transglycosylase</fullName>
    </alternativeName>
</protein>
<accession>A1SWU0</accession>